<proteinExistence type="evidence at protein level"/>
<organism>
    <name type="scientific">Mycobacterium tuberculosis (strain ATCC 25618 / H37Rv)</name>
    <dbReference type="NCBI Taxonomy" id="83332"/>
    <lineage>
        <taxon>Bacteria</taxon>
        <taxon>Bacillati</taxon>
        <taxon>Actinomycetota</taxon>
        <taxon>Actinomycetes</taxon>
        <taxon>Mycobacteriales</taxon>
        <taxon>Mycobacteriaceae</taxon>
        <taxon>Mycobacterium</taxon>
        <taxon>Mycobacterium tuberculosis complex</taxon>
    </lineage>
</organism>
<accession>P9WKI7</accession>
<accession>L0TCG3</accession>
<accession>P65167</accession>
<accession>Q50715</accession>
<evidence type="ECO:0000255" key="1">
    <source>
        <dbReference type="HAMAP-Rule" id="MF_01964"/>
    </source>
</evidence>
<evidence type="ECO:0000269" key="2">
    <source>
    </source>
</evidence>
<evidence type="ECO:0000269" key="3">
    <source>
    </source>
</evidence>
<evidence type="ECO:0000269" key="4">
    <source>
    </source>
</evidence>
<evidence type="ECO:0000269" key="5">
    <source>
    </source>
</evidence>
<evidence type="ECO:0000269" key="6">
    <source>
    </source>
</evidence>
<evidence type="ECO:0000303" key="7">
    <source>
    </source>
</evidence>
<evidence type="ECO:0000303" key="8">
    <source>
    </source>
</evidence>
<evidence type="ECO:0000303" key="9">
    <source>
    </source>
</evidence>
<evidence type="ECO:0000305" key="10">
    <source>
    </source>
</evidence>
<evidence type="ECO:0000312" key="11">
    <source>
        <dbReference type="EMBL" id="CCP46233.1"/>
    </source>
</evidence>
<evidence type="ECO:0007829" key="12">
    <source>
        <dbReference type="PDB" id="4ZQM"/>
    </source>
</evidence>
<evidence type="ECO:0007829" key="13">
    <source>
        <dbReference type="PDB" id="4ZQR"/>
    </source>
</evidence>
<evidence type="ECO:0007829" key="14">
    <source>
        <dbReference type="PDB" id="9DC8"/>
    </source>
</evidence>
<keyword id="KW-0002">3D-structure</keyword>
<keyword id="KW-0129">CBS domain</keyword>
<keyword id="KW-0332">GMP biosynthesis</keyword>
<keyword id="KW-0479">Metal-binding</keyword>
<keyword id="KW-0520">NAD</keyword>
<keyword id="KW-0560">Oxidoreductase</keyword>
<keyword id="KW-0630">Potassium</keyword>
<keyword id="KW-0658">Purine biosynthesis</keyword>
<keyword id="KW-1185">Reference proteome</keyword>
<keyword id="KW-0677">Repeat</keyword>
<feature type="chain" id="PRO_0000093702" description="Inosine-5'-monophosphate dehydrogenase">
    <location>
        <begin position="1"/>
        <end position="529"/>
    </location>
</feature>
<feature type="domain" description="CBS 1" evidence="1">
    <location>
        <begin position="129"/>
        <end position="185"/>
    </location>
</feature>
<feature type="domain" description="CBS 2" evidence="1">
    <location>
        <begin position="189"/>
        <end position="246"/>
    </location>
</feature>
<feature type="active site" description="Thioimidate intermediate" evidence="1 10">
    <location>
        <position position="341"/>
    </location>
</feature>
<feature type="active site" description="Proton acceptor" evidence="1 10">
    <location>
        <position position="443"/>
    </location>
</feature>
<feature type="binding site" evidence="1 6">
    <location>
        <position position="283"/>
    </location>
    <ligand>
        <name>NAD(+)</name>
        <dbReference type="ChEBI" id="CHEBI:57540"/>
    </ligand>
</feature>
<feature type="binding site" evidence="6">
    <location>
        <position position="289"/>
    </location>
    <ligand>
        <name>NAD(+)</name>
        <dbReference type="ChEBI" id="CHEBI:57540"/>
    </ligand>
</feature>
<feature type="binding site" evidence="1">
    <location>
        <begin position="334"/>
        <end position="336"/>
    </location>
    <ligand>
        <name>NAD(+)</name>
        <dbReference type="ChEBI" id="CHEBI:57540"/>
    </ligand>
</feature>
<feature type="binding site" description="in other chain" evidence="1 6">
    <location>
        <position position="336"/>
    </location>
    <ligand>
        <name>K(+)</name>
        <dbReference type="ChEBI" id="CHEBI:29103"/>
        <note>ligand shared between two tetrameric partners</note>
    </ligand>
</feature>
<feature type="binding site" description="in other chain" evidence="1 6">
    <location>
        <position position="338"/>
    </location>
    <ligand>
        <name>K(+)</name>
        <dbReference type="ChEBI" id="CHEBI:29103"/>
        <note>ligand shared between two tetrameric partners</note>
    </ligand>
</feature>
<feature type="binding site" evidence="1 6">
    <location>
        <position position="339"/>
    </location>
    <ligand>
        <name>IMP</name>
        <dbReference type="ChEBI" id="CHEBI:58053"/>
    </ligand>
</feature>
<feature type="binding site" description="in other chain" evidence="1 6">
    <location>
        <position position="341"/>
    </location>
    <ligand>
        <name>K(+)</name>
        <dbReference type="ChEBI" id="CHEBI:29103"/>
        <note>ligand shared between two tetrameric partners</note>
    </ligand>
</feature>
<feature type="binding site" evidence="6">
    <location>
        <position position="343"/>
    </location>
    <ligand>
        <name>NAD(+)</name>
        <dbReference type="ChEBI" id="CHEBI:57540"/>
    </ligand>
</feature>
<feature type="binding site" evidence="1 6">
    <location>
        <begin position="374"/>
        <end position="376"/>
    </location>
    <ligand>
        <name>IMP</name>
        <dbReference type="ChEBI" id="CHEBI:58053"/>
    </ligand>
</feature>
<feature type="binding site" evidence="1 6">
    <location>
        <begin position="397"/>
        <end position="398"/>
    </location>
    <ligand>
        <name>IMP</name>
        <dbReference type="ChEBI" id="CHEBI:58053"/>
    </ligand>
</feature>
<feature type="binding site" evidence="1 6">
    <location>
        <begin position="421"/>
        <end position="425"/>
    </location>
    <ligand>
        <name>IMP</name>
        <dbReference type="ChEBI" id="CHEBI:58053"/>
    </ligand>
</feature>
<feature type="binding site" evidence="1 6">
    <location>
        <position position="458"/>
    </location>
    <ligand>
        <name>IMP</name>
        <dbReference type="ChEBI" id="CHEBI:58053"/>
    </ligand>
</feature>
<feature type="binding site" evidence="6">
    <location>
        <position position="458"/>
    </location>
    <ligand>
        <name>NAD(+)</name>
        <dbReference type="ChEBI" id="CHEBI:57540"/>
    </ligand>
</feature>
<feature type="binding site" evidence="1 6">
    <location>
        <position position="511"/>
    </location>
    <ligand>
        <name>K(+)</name>
        <dbReference type="ChEBI" id="CHEBI:29103"/>
        <note>ligand shared between two tetrameric partners</note>
    </ligand>
</feature>
<feature type="binding site" evidence="1 6">
    <location>
        <position position="512"/>
    </location>
    <ligand>
        <name>K(+)</name>
        <dbReference type="ChEBI" id="CHEBI:29103"/>
        <note>ligand shared between two tetrameric partners</note>
    </ligand>
</feature>
<feature type="binding site" evidence="1 6">
    <location>
        <position position="513"/>
    </location>
    <ligand>
        <name>K(+)</name>
        <dbReference type="ChEBI" id="CHEBI:29103"/>
        <note>ligand shared between two tetrameric partners</note>
    </ligand>
</feature>
<feature type="strand" evidence="14">
    <location>
        <begin position="33"/>
        <end position="35"/>
    </location>
</feature>
<feature type="strand" evidence="13">
    <location>
        <begin position="39"/>
        <end position="44"/>
    </location>
</feature>
<feature type="helix" evidence="14">
    <location>
        <begin position="47"/>
        <end position="49"/>
    </location>
</feature>
<feature type="strand" evidence="14">
    <location>
        <begin position="50"/>
        <end position="52"/>
    </location>
</feature>
<feature type="helix" evidence="14">
    <location>
        <begin position="61"/>
        <end position="63"/>
    </location>
</feature>
<feature type="strand" evidence="14">
    <location>
        <begin position="68"/>
        <end position="73"/>
    </location>
</feature>
<feature type="strand" evidence="14">
    <location>
        <begin position="75"/>
        <end position="78"/>
    </location>
</feature>
<feature type="strand" evidence="14">
    <location>
        <begin position="80"/>
        <end position="82"/>
    </location>
</feature>
<feature type="turn" evidence="14">
    <location>
        <begin position="86"/>
        <end position="88"/>
    </location>
</feature>
<feature type="helix" evidence="14">
    <location>
        <begin position="91"/>
        <end position="99"/>
    </location>
</feature>
<feature type="strand" evidence="14">
    <location>
        <begin position="102"/>
        <end position="106"/>
    </location>
</feature>
<feature type="strand" evidence="12">
    <location>
        <begin position="108"/>
        <end position="110"/>
    </location>
</feature>
<feature type="helix" evidence="14">
    <location>
        <begin position="112"/>
        <end position="123"/>
    </location>
</feature>
<feature type="strand" evidence="14">
    <location>
        <begin position="256"/>
        <end position="259"/>
    </location>
</feature>
<feature type="helix" evidence="14">
    <location>
        <begin position="263"/>
        <end position="274"/>
    </location>
</feature>
<feature type="strand" evidence="14">
    <location>
        <begin position="278"/>
        <end position="283"/>
    </location>
</feature>
<feature type="helix" evidence="14">
    <location>
        <begin position="290"/>
        <end position="303"/>
    </location>
</feature>
<feature type="turn" evidence="14">
    <location>
        <begin position="304"/>
        <end position="306"/>
    </location>
</feature>
<feature type="strand" evidence="14">
    <location>
        <begin position="307"/>
        <end position="314"/>
    </location>
</feature>
<feature type="helix" evidence="14">
    <location>
        <begin position="317"/>
        <end position="326"/>
    </location>
</feature>
<feature type="strand" evidence="14">
    <location>
        <begin position="329"/>
        <end position="333"/>
    </location>
</feature>
<feature type="helix" evidence="14">
    <location>
        <begin position="343"/>
        <end position="346"/>
    </location>
</feature>
<feature type="helix" evidence="14">
    <location>
        <begin position="353"/>
        <end position="364"/>
    </location>
</feature>
<feature type="helix" evidence="14">
    <location>
        <begin position="365"/>
        <end position="367"/>
    </location>
</feature>
<feature type="strand" evidence="14">
    <location>
        <begin position="371"/>
        <end position="375"/>
    </location>
</feature>
<feature type="helix" evidence="14">
    <location>
        <begin position="380"/>
        <end position="388"/>
    </location>
</feature>
<feature type="strand" evidence="14">
    <location>
        <begin position="392"/>
        <end position="397"/>
    </location>
</feature>
<feature type="helix" evidence="14">
    <location>
        <begin position="398"/>
        <end position="401"/>
    </location>
</feature>
<feature type="strand" evidence="14">
    <location>
        <begin position="406"/>
        <end position="408"/>
    </location>
</feature>
<feature type="strand" evidence="14">
    <location>
        <begin position="411"/>
        <end position="413"/>
    </location>
</feature>
<feature type="strand" evidence="14">
    <location>
        <begin position="416"/>
        <end position="422"/>
    </location>
</feature>
<feature type="helix" evidence="14">
    <location>
        <begin position="427"/>
        <end position="430"/>
    </location>
</feature>
<feature type="strand" evidence="14">
    <location>
        <begin position="461"/>
        <end position="465"/>
    </location>
</feature>
<feature type="helix" evidence="14">
    <location>
        <begin position="470"/>
        <end position="488"/>
    </location>
</feature>
<feature type="helix" evidence="14">
    <location>
        <begin position="493"/>
        <end position="496"/>
    </location>
</feature>
<feature type="strand" evidence="14">
    <location>
        <begin position="501"/>
        <end position="503"/>
    </location>
</feature>
<feature type="helix" evidence="14">
    <location>
        <begin position="506"/>
        <end position="510"/>
    </location>
</feature>
<feature type="turn" evidence="14">
    <location>
        <begin position="511"/>
        <end position="514"/>
    </location>
</feature>
<feature type="strand" evidence="13">
    <location>
        <begin position="516"/>
        <end position="521"/>
    </location>
</feature>
<sequence>MSRGMSGLEDSSDLVVSPYVRMGGLTTDPVPTGGDDPHKVAMLGLTFDDVLLLPAASDVVPATADTSSQLTKKIRLKVPLVSSAMDTVTESRMAIAMARAGGMGVLHRNLPVAEQAGQVEMVKRSEAGMVTDPVTCRPDNTLAQVDALCARFRISGLPVVDDDGALVGIITNRDMRFEVDQSKQVAEVMTKAPLITAQEGVSASAALGLLRRNKIEKLPVVDGRGRLTGLITVKDFVKTEQHPLATKDSDGRLLVGAAVGVGGDAWVRAMMLVDAGVDVLVVDTAHAHNRLVLDMVGKLKSEVGDRVEVVGGNVATRSAAAALVDAGADAVKVGVGPGSICTTRVVAGVGAPQITAILEAVAACRPAGVPVIADGGLQYSGDIAKALAAGASTAMLGSLLAGTAEAPGELIFVNGKQYKSYRGMGSLGAMRGRGGATSYSKDRYFADDALSEDKLVPEGIEGRVPFRGPLSSVIHQLTGGLRAAMGYTGSPTIEVLQQAQFVRITPAGLKESHPHDVAMTVEAPNYYAR</sequence>
<gene>
    <name evidence="1" type="primary">guaB</name>
    <name evidence="7 8 11" type="synonym">guaB2</name>
    <name type="ordered locus">Rv3411c</name>
    <name type="ORF">MTCY78.17</name>
</gene>
<reference key="1">
    <citation type="journal article" date="1998" name="Nature">
        <title>Deciphering the biology of Mycobacterium tuberculosis from the complete genome sequence.</title>
        <authorList>
            <person name="Cole S.T."/>
            <person name="Brosch R."/>
            <person name="Parkhill J."/>
            <person name="Garnier T."/>
            <person name="Churcher C.M."/>
            <person name="Harris D.E."/>
            <person name="Gordon S.V."/>
            <person name="Eiglmeier K."/>
            <person name="Gas S."/>
            <person name="Barry C.E. III"/>
            <person name="Tekaia F."/>
            <person name="Badcock K."/>
            <person name="Basham D."/>
            <person name="Brown D."/>
            <person name="Chillingworth T."/>
            <person name="Connor R."/>
            <person name="Davies R.M."/>
            <person name="Devlin K."/>
            <person name="Feltwell T."/>
            <person name="Gentles S."/>
            <person name="Hamlin N."/>
            <person name="Holroyd S."/>
            <person name="Hornsby T."/>
            <person name="Jagels K."/>
            <person name="Krogh A."/>
            <person name="McLean J."/>
            <person name="Moule S."/>
            <person name="Murphy L.D."/>
            <person name="Oliver S."/>
            <person name="Osborne J."/>
            <person name="Quail M.A."/>
            <person name="Rajandream M.A."/>
            <person name="Rogers J."/>
            <person name="Rutter S."/>
            <person name="Seeger K."/>
            <person name="Skelton S."/>
            <person name="Squares S."/>
            <person name="Squares R."/>
            <person name="Sulston J.E."/>
            <person name="Taylor K."/>
            <person name="Whitehead S."/>
            <person name="Barrell B.G."/>
        </authorList>
    </citation>
    <scope>NUCLEOTIDE SEQUENCE [LARGE SCALE GENOMIC DNA]</scope>
    <source>
        <strain>ATCC 25618 / H37Rv</strain>
    </source>
</reference>
<reference key="2">
    <citation type="journal article" date="2003" name="Mol. Microbiol.">
        <title>Genes required for mycobacterial growth defined by high density mutagenesis.</title>
        <authorList>
            <person name="Sassetti C.M."/>
            <person name="Boyd D.H."/>
            <person name="Rubin E.J."/>
        </authorList>
    </citation>
    <scope>DISRUPTION PHENOTYPE</scope>
    <source>
        <strain>ATCC 25618 / H37Rv</strain>
    </source>
</reference>
<reference key="3">
    <citation type="journal article" date="2010" name="J. Med. Chem.">
        <title>Triazole-linked inhibitors of inosine monophosphate dehydrogenase from human and Mycobacterium tuberculosis.</title>
        <authorList>
            <person name="Chen L."/>
            <person name="Wilson D.J."/>
            <person name="Xu Y."/>
            <person name="Aldrich C.C."/>
            <person name="Felczak K."/>
            <person name="Sham Y.Y."/>
            <person name="Pankiewicz K.W."/>
        </authorList>
    </citation>
    <scope>FUNCTION</scope>
    <scope>CATALYTIC ACTIVITY</scope>
    <scope>BIOPHYSICOCHEMICAL PROPERTIES</scope>
    <scope>ACTIVITY REGULATION</scope>
    <source>
        <strain>H37Rv</strain>
    </source>
</reference>
<reference key="4">
    <citation type="journal article" date="2011" name="Microbiology">
        <title>Identification of novel diphenyl urea inhibitors of Mt-GuaB2 active against Mycobacterium tuberculosis.</title>
        <authorList>
            <person name="Usha V."/>
            <person name="Gurcha S.S."/>
            <person name="Lovering A.L."/>
            <person name="Lloyd A.J."/>
            <person name="Papaemmanouil A."/>
            <person name="Reynolds R.C."/>
            <person name="Besra G.S."/>
        </authorList>
    </citation>
    <scope>FUNCTION</scope>
    <scope>CATALYTIC ACTIVITY</scope>
    <scope>COFACTOR</scope>
    <scope>BIOPHYSICOCHEMICAL PROPERTIES</scope>
    <scope>ACTIVITY REGULATION</scope>
    <source>
        <strain>ATCC 25618 / H37Rv</strain>
    </source>
</reference>
<reference key="5">
    <citation type="journal article" date="2011" name="Mol. Cell. Proteomics">
        <title>Proteogenomic analysis of Mycobacterium tuberculosis by high resolution mass spectrometry.</title>
        <authorList>
            <person name="Kelkar D.S."/>
            <person name="Kumar D."/>
            <person name="Kumar P."/>
            <person name="Balakrishnan L."/>
            <person name="Muthusamy B."/>
            <person name="Yadav A.K."/>
            <person name="Shrivastava P."/>
            <person name="Marimuthu A."/>
            <person name="Anand S."/>
            <person name="Sundaram H."/>
            <person name="Kingsbury R."/>
            <person name="Harsha H.C."/>
            <person name="Nair B."/>
            <person name="Prasad T.S."/>
            <person name="Chauhan D.S."/>
            <person name="Katoch K."/>
            <person name="Katoch V.M."/>
            <person name="Kumar P."/>
            <person name="Chaerkady R."/>
            <person name="Ramachandran S."/>
            <person name="Dash D."/>
            <person name="Pandey A."/>
        </authorList>
    </citation>
    <scope>IDENTIFICATION BY MASS SPECTROMETRY [LARGE SCALE ANALYSIS]</scope>
    <source>
        <strain>ATCC 25618 / H37Rv</strain>
    </source>
</reference>
<reference key="6">
    <citation type="journal article" date="2012" name="PLoS ONE">
        <title>Identification of novel Mt-Guab2 inhibitor series active against M. tuberculosis.</title>
        <authorList>
            <person name="Usha V."/>
            <person name="Hobrath J.V."/>
            <person name="Gurcha S.S."/>
            <person name="Reynolds R.C."/>
            <person name="Besra G.S."/>
        </authorList>
    </citation>
    <scope>ACTIVITY REGULATION</scope>
    <source>
        <strain>H37Rv</strain>
    </source>
</reference>
<reference key="7">
    <citation type="journal article" date="2015" name="PLoS ONE">
        <title>Mycobacterium tuberculosis IMPDH in complexes with substrates, products and antitubercular compounds.</title>
        <authorList>
            <person name="Makowska-Grzyska M."/>
            <person name="Kim Y."/>
            <person name="Gorla S.K."/>
            <person name="Wei Y."/>
            <person name="Mandapati K."/>
            <person name="Zhang M."/>
            <person name="Maltseva N."/>
            <person name="Modi G."/>
            <person name="Boshoff H.I."/>
            <person name="Gu M."/>
            <person name="Aldrich C."/>
            <person name="Cuny G.D."/>
            <person name="Hedstrom L."/>
            <person name="Joachimiak A."/>
        </authorList>
    </citation>
    <scope>X-RAY CRYSTALLOGRAPHY (1.60 ANGSTROMS) OF 1-125 AND 253-529 IN COMPLEXES WITH POTASSIUM; XMP; NAD(+); IMP AND INHIBITORS WITH ANTITUBERCULAR ACTIVITY</scope>
    <scope>ACTIVITY REGULATION</scope>
    <scope>REACTION MECHANISM</scope>
    <scope>ACTIVE SITE</scope>
    <scope>SUBUNIT</scope>
    <source>
        <strain>H37Rv</strain>
    </source>
</reference>
<dbReference type="EC" id="1.1.1.205" evidence="1 3 4"/>
<dbReference type="EMBL" id="AL123456">
    <property type="protein sequence ID" value="CCP46233.1"/>
    <property type="molecule type" value="Genomic_DNA"/>
</dbReference>
<dbReference type="PIR" id="H70736">
    <property type="entry name" value="H70736"/>
</dbReference>
<dbReference type="RefSeq" id="NP_217928.1">
    <property type="nucleotide sequence ID" value="NC_000962.3"/>
</dbReference>
<dbReference type="RefSeq" id="WP_003900682.1">
    <property type="nucleotide sequence ID" value="NZ_NVQJ01000027.1"/>
</dbReference>
<dbReference type="PDB" id="4ZQM">
    <property type="method" value="X-ray"/>
    <property type="resolution" value="1.60 A"/>
    <property type="chains" value="A=1-125, A=253-529"/>
</dbReference>
<dbReference type="PDB" id="4ZQN">
    <property type="method" value="X-ray"/>
    <property type="resolution" value="2.00 A"/>
    <property type="chains" value="A=1-125, A=253-529"/>
</dbReference>
<dbReference type="PDB" id="4ZQO">
    <property type="method" value="X-ray"/>
    <property type="resolution" value="1.76 A"/>
    <property type="chains" value="A=1-125, A=253-529"/>
</dbReference>
<dbReference type="PDB" id="4ZQP">
    <property type="method" value="X-ray"/>
    <property type="resolution" value="1.90 A"/>
    <property type="chains" value="A=1-125, A=253-529"/>
</dbReference>
<dbReference type="PDB" id="4ZQR">
    <property type="method" value="X-ray"/>
    <property type="resolution" value="1.69 A"/>
    <property type="chains" value="A/B/C/D=1-125, A/B/C/D=253-529"/>
</dbReference>
<dbReference type="PDB" id="5UPU">
    <property type="method" value="X-ray"/>
    <property type="resolution" value="2.90 A"/>
    <property type="chains" value="A=1-125, A=256-529"/>
</dbReference>
<dbReference type="PDB" id="5UPV">
    <property type="method" value="X-ray"/>
    <property type="resolution" value="1.63 A"/>
    <property type="chains" value="A=1-125, A=256-529"/>
</dbReference>
<dbReference type="PDB" id="9DC8">
    <property type="method" value="X-ray"/>
    <property type="resolution" value="1.60 A"/>
    <property type="chains" value="A=2-125, A=253-529"/>
</dbReference>
<dbReference type="PDB" id="9DC9">
    <property type="method" value="X-ray"/>
    <property type="resolution" value="1.60 A"/>
    <property type="chains" value="A=2-125, A=253-529"/>
</dbReference>
<dbReference type="PDBsum" id="4ZQM"/>
<dbReference type="PDBsum" id="4ZQN"/>
<dbReference type="PDBsum" id="4ZQO"/>
<dbReference type="PDBsum" id="4ZQP"/>
<dbReference type="PDBsum" id="4ZQR"/>
<dbReference type="PDBsum" id="5UPU"/>
<dbReference type="PDBsum" id="5UPV"/>
<dbReference type="PDBsum" id="9DC8"/>
<dbReference type="PDBsum" id="9DC9"/>
<dbReference type="SMR" id="P9WKI7"/>
<dbReference type="FunCoup" id="P9WKI7">
    <property type="interactions" value="339"/>
</dbReference>
<dbReference type="STRING" id="83332.Rv3411c"/>
<dbReference type="BindingDB" id="P9WKI7"/>
<dbReference type="ChEMBL" id="CHEMBL4295586"/>
<dbReference type="PaxDb" id="83332-Rv3411c"/>
<dbReference type="DNASU" id="887498"/>
<dbReference type="GeneID" id="45427407"/>
<dbReference type="GeneID" id="887498"/>
<dbReference type="KEGG" id="mtu:Rv3411c"/>
<dbReference type="KEGG" id="mtv:RVBD_3411c"/>
<dbReference type="TubercuList" id="Rv3411c"/>
<dbReference type="eggNOG" id="COG0516">
    <property type="taxonomic scope" value="Bacteria"/>
</dbReference>
<dbReference type="eggNOG" id="COG0517">
    <property type="taxonomic scope" value="Bacteria"/>
</dbReference>
<dbReference type="InParanoid" id="P9WKI7"/>
<dbReference type="OrthoDB" id="9805398at2"/>
<dbReference type="PhylomeDB" id="P9WKI7"/>
<dbReference type="BRENDA" id="1.1.1.205">
    <property type="organism ID" value="3445"/>
</dbReference>
<dbReference type="UniPathway" id="UPA00601">
    <property type="reaction ID" value="UER00295"/>
</dbReference>
<dbReference type="EvolutionaryTrace" id="P9WKI7"/>
<dbReference type="Proteomes" id="UP000001584">
    <property type="component" value="Chromosome"/>
</dbReference>
<dbReference type="GO" id="GO:0009274">
    <property type="term" value="C:peptidoglycan-based cell wall"/>
    <property type="evidence" value="ECO:0007005"/>
    <property type="project" value="MTBBASE"/>
</dbReference>
<dbReference type="GO" id="GO:0005886">
    <property type="term" value="C:plasma membrane"/>
    <property type="evidence" value="ECO:0007005"/>
    <property type="project" value="MTBBASE"/>
</dbReference>
<dbReference type="GO" id="GO:0003938">
    <property type="term" value="F:IMP dehydrogenase activity"/>
    <property type="evidence" value="ECO:0000314"/>
    <property type="project" value="MTBBASE"/>
</dbReference>
<dbReference type="GO" id="GO:0046872">
    <property type="term" value="F:metal ion binding"/>
    <property type="evidence" value="ECO:0007669"/>
    <property type="project" value="UniProtKB-UniRule"/>
</dbReference>
<dbReference type="GO" id="GO:0000166">
    <property type="term" value="F:nucleotide binding"/>
    <property type="evidence" value="ECO:0007669"/>
    <property type="project" value="UniProtKB-UniRule"/>
</dbReference>
<dbReference type="GO" id="GO:0006177">
    <property type="term" value="P:GMP biosynthetic process"/>
    <property type="evidence" value="ECO:0000314"/>
    <property type="project" value="MTBBASE"/>
</dbReference>
<dbReference type="GO" id="GO:0006183">
    <property type="term" value="P:GTP biosynthetic process"/>
    <property type="evidence" value="ECO:0000318"/>
    <property type="project" value="GO_Central"/>
</dbReference>
<dbReference type="GO" id="GO:0006204">
    <property type="term" value="P:IMP catabolic process"/>
    <property type="evidence" value="ECO:0000314"/>
    <property type="project" value="MTBBASE"/>
</dbReference>
<dbReference type="GO" id="GO:0097293">
    <property type="term" value="P:XMP biosynthetic process"/>
    <property type="evidence" value="ECO:0000314"/>
    <property type="project" value="MTBBASE"/>
</dbReference>
<dbReference type="CDD" id="cd04601">
    <property type="entry name" value="CBS_pair_IMPDH"/>
    <property type="match status" value="1"/>
</dbReference>
<dbReference type="CDD" id="cd00381">
    <property type="entry name" value="IMPDH"/>
    <property type="match status" value="1"/>
</dbReference>
<dbReference type="FunFam" id="3.20.20.70:FF:000003">
    <property type="entry name" value="GMP reductase"/>
    <property type="match status" value="1"/>
</dbReference>
<dbReference type="Gene3D" id="3.20.20.70">
    <property type="entry name" value="Aldolase class I"/>
    <property type="match status" value="1"/>
</dbReference>
<dbReference type="HAMAP" id="MF_01964">
    <property type="entry name" value="IMPDH"/>
    <property type="match status" value="1"/>
</dbReference>
<dbReference type="InterPro" id="IPR013785">
    <property type="entry name" value="Aldolase_TIM"/>
</dbReference>
<dbReference type="InterPro" id="IPR000644">
    <property type="entry name" value="CBS_dom"/>
</dbReference>
<dbReference type="InterPro" id="IPR046342">
    <property type="entry name" value="CBS_dom_sf"/>
</dbReference>
<dbReference type="InterPro" id="IPR005990">
    <property type="entry name" value="IMP_DH"/>
</dbReference>
<dbReference type="InterPro" id="IPR015875">
    <property type="entry name" value="IMP_DH/GMP_Rdtase_CS"/>
</dbReference>
<dbReference type="InterPro" id="IPR001093">
    <property type="entry name" value="IMP_DH_GMPRt"/>
</dbReference>
<dbReference type="NCBIfam" id="TIGR01302">
    <property type="entry name" value="IMP_dehydrog"/>
    <property type="match status" value="1"/>
</dbReference>
<dbReference type="PANTHER" id="PTHR11911:SF111">
    <property type="entry name" value="INOSINE-5'-MONOPHOSPHATE DEHYDROGENASE"/>
    <property type="match status" value="1"/>
</dbReference>
<dbReference type="PANTHER" id="PTHR11911">
    <property type="entry name" value="INOSINE-5-MONOPHOSPHATE DEHYDROGENASE RELATED"/>
    <property type="match status" value="1"/>
</dbReference>
<dbReference type="Pfam" id="PF00571">
    <property type="entry name" value="CBS"/>
    <property type="match status" value="2"/>
</dbReference>
<dbReference type="Pfam" id="PF00478">
    <property type="entry name" value="IMPDH"/>
    <property type="match status" value="1"/>
</dbReference>
<dbReference type="PIRSF" id="PIRSF000130">
    <property type="entry name" value="IMPDH"/>
    <property type="match status" value="1"/>
</dbReference>
<dbReference type="SMART" id="SM00116">
    <property type="entry name" value="CBS"/>
    <property type="match status" value="2"/>
</dbReference>
<dbReference type="SMART" id="SM01240">
    <property type="entry name" value="IMPDH"/>
    <property type="match status" value="1"/>
</dbReference>
<dbReference type="SUPFAM" id="SSF54631">
    <property type="entry name" value="CBS-domain pair"/>
    <property type="match status" value="1"/>
</dbReference>
<dbReference type="SUPFAM" id="SSF51412">
    <property type="entry name" value="Inosine monophosphate dehydrogenase (IMPDH)"/>
    <property type="match status" value="1"/>
</dbReference>
<dbReference type="PROSITE" id="PS51371">
    <property type="entry name" value="CBS"/>
    <property type="match status" value="2"/>
</dbReference>
<dbReference type="PROSITE" id="PS00487">
    <property type="entry name" value="IMP_DH_GMP_RED"/>
    <property type="match status" value="1"/>
</dbReference>
<name>IMDH_MYCTU</name>
<comment type="function">
    <text evidence="1 2 3 4">Catalyzes the conversion of inosine 5'-phosphate (IMP) to xanthosine 5'-phosphate (XMP), the first committed and rate-limiting step in the de novo synthesis of guanine nucleotides, and therefore plays an important role in the regulation of cell growth (PubMed:20491506, PubMed:21081761). Does not catalyze the reverse reaction, i.e. the conversion of XMP to IMP (PubMed:21081761). Appears to be essential for the optimal growth of M.tuberculosis (PubMed:12657046).</text>
</comment>
<comment type="catalytic activity">
    <reaction evidence="1 3 4">
        <text>IMP + NAD(+) + H2O = XMP + NADH + H(+)</text>
        <dbReference type="Rhea" id="RHEA:11708"/>
        <dbReference type="ChEBI" id="CHEBI:15377"/>
        <dbReference type="ChEBI" id="CHEBI:15378"/>
        <dbReference type="ChEBI" id="CHEBI:57464"/>
        <dbReference type="ChEBI" id="CHEBI:57540"/>
        <dbReference type="ChEBI" id="CHEBI:57945"/>
        <dbReference type="ChEBI" id="CHEBI:58053"/>
        <dbReference type="EC" id="1.1.1.205"/>
    </reaction>
</comment>
<comment type="cofactor">
    <cofactor evidence="1 4">
        <name>K(+)</name>
        <dbReference type="ChEBI" id="CHEBI:29103"/>
    </cofactor>
</comment>
<comment type="activity regulation">
    <text evidence="1 3 4 5 6">Mycophenolic acid (MPA) is a non-competitive inhibitor that prevents formation of the closed enzyme conformation by binding to the same site as the amobile flap. In contrast, mizoribine monophosphate (MZP) is a competitive inhibitor that induces the closed conformation. MPA is a potent inhibitor of mammalian IMPDHs but a poor inhibitor of the bacterial enzymes. MZP is a more potent inhibitor of bacterial IMPDH (By similarity). Inhibited by the products XMP and NADH. Significantly inhibited in vitro by a panel of diphenyl urea-based derivatives and a series of novel classes of inhibitors, which are also potent anti-mycobacterial agents against M.tuberculosis and M.smegmatis (PubMed:21081761, PubMed:22479467). Is also inhibited by a mycophenolic adenine dinucleotide (MAD) derivative in which a 1,2,3-triazole linker was incorporated as isosteric replacement of the pyrophosphate linker, thereby mimicking NAD (PubMed:20491506). Other inhibitors with modular structures consisting of two aromatic moieties connected by different linkers (such as urea and amide) have been identified and shown to exhibit antitubercular activity (PubMed:26440283).</text>
</comment>
<comment type="biophysicochemical properties">
    <kinetics>
        <KM evidence="3">78 uM for inosine 5'-phosphate</KM>
        <KM evidence="3">1005 uM for NAD(+)</KM>
        <KM evidence="4">128.1 uM for inosine 5'-phosphate</KM>
        <KM evidence="4">610.5 uM for NAD(+)</KM>
        <text evidence="3">kcat is 0.53 sec(-1).</text>
    </kinetics>
    <phDependence>
        <text evidence="4">Optimum pH is 8-8.5.</text>
    </phDependence>
    <temperatureDependence>
        <text evidence="4">Optimum temperature is 37 degrees Celsius.</text>
    </temperatureDependence>
</comment>
<comment type="pathway">
    <text evidence="1">Purine metabolism; XMP biosynthesis via de novo pathway; XMP from IMP: step 1/1.</text>
</comment>
<comment type="subunit">
    <text evidence="1 10">Homotetramer.</text>
</comment>
<comment type="disruption phenotype">
    <text evidence="2">Cells lacking this gene display impaired growth.</text>
</comment>
<comment type="similarity">
    <text evidence="1">Belongs to the IMPDH/GMPR family.</text>
</comment>
<protein>
    <recommendedName>
        <fullName evidence="1">Inosine-5'-monophosphate dehydrogenase</fullName>
        <shortName evidence="1">IMP dehydrogenase</shortName>
        <shortName evidence="1">IMPD</shortName>
        <shortName evidence="1">IMPDH</shortName>
        <ecNumber evidence="1 3 4">1.1.1.205</ecNumber>
    </recommendedName>
    <alternativeName>
        <fullName evidence="9">IMPDH2</fullName>
    </alternativeName>
</protein>